<sequence length="519" mass="57562">MSLRFHTLPTLPRAVKPGCRELLCLLVIAVMVSPSASGMCPTACICATDIVSCTNKNLSKVPGNLFRLIKRLDLSYNRIGLLDADWIPVSFVKLSTLILRHNNITSISTGSFSTTPNLKCLDLSSNRLKSVKSATFQELKALEVLLLYNNHISYLDPAAFGGLSHLQKLYLSGNFLTQFPMDLYTGRFKLADLTFLDVSYNRIPSIPMHHINLVPGRQLRGIYLHGNPFVCDCSLYSLLIFWYRRHFSSVMDFKNDYTCRLWSDSRHSHQLQLLQESFLNCSYSVINGSFHALGFIHEAQVGERAIVHCDSKTGNGNTDFIWVGPDNRLLEPDKDMGNFRVFYNGSLVIENPGFEDAGVYSCIAMNRQRLLNETVDIMINVSNFTINRSHAHEAFNTAFTTLAACVASIVLVLLYLYLTPCPCKCKAKRQKNTLSQSSAHSSILSPGPTGDASADDRKAGKRVVFLEPLKDTAAGQNGKVKLFPSETVIAEGILKSTRAKSDSDSVNSVFSDTPFVAST</sequence>
<protein>
    <recommendedName>
        <fullName>Amphoterin-induced protein 2</fullName>
    </recommendedName>
    <alternativeName>
        <fullName>AMIGO-2</fullName>
    </alternativeName>
    <alternativeName>
        <fullName>Alivin-1</fullName>
    </alternativeName>
</protein>
<comment type="function">
    <text evidence="1">Required for depolarization-dependent survival of cultured cerebellar granule neurons. May mediate homophilic as well as heterophilic cell-cell interaction with AMIGO1 or AMIGO3. May contribute to signal transduction through its intracellular domain (By similarity).</text>
</comment>
<comment type="subunit">
    <text evidence="1">Binds itself as well as AMIGO1 and AMIGO3.</text>
</comment>
<comment type="subcellular location">
    <subcellularLocation>
        <location evidence="1">Cell membrane</location>
        <topology evidence="1">Single-pass type I membrane protein</topology>
    </subcellularLocation>
    <subcellularLocation>
        <location evidence="1">Nucleus</location>
    </subcellularLocation>
    <text evidence="1">Associated with nucleus as well as plasma membrane. Restricted to somata of cerebellar as well as hippocampal neurons (By similarity).</text>
</comment>
<comment type="tissue specificity">
    <text evidence="5">Highest level in cerebellum, retina, liver, and lung. Lower levels in cerebrum, kidney, small intestine, spleen and testis.</text>
</comment>
<comment type="similarity">
    <text evidence="6">Belongs to the immunoglobulin superfamily. AMIGO family.</text>
</comment>
<gene>
    <name evidence="7" type="primary">Amigo2</name>
    <name evidence="8" type="synonym">Ali1</name>
</gene>
<feature type="signal peptide" evidence="2">
    <location>
        <begin position="1"/>
        <end position="38"/>
    </location>
</feature>
<feature type="chain" id="PRO_0000014510" description="Amphoterin-induced protein 2" evidence="2">
    <location>
        <begin position="39"/>
        <end position="519"/>
    </location>
</feature>
<feature type="topological domain" description="Extracellular" evidence="2">
    <location>
        <begin position="39"/>
        <end position="397"/>
    </location>
</feature>
<feature type="transmembrane region" description="Helical" evidence="2">
    <location>
        <begin position="398"/>
        <end position="418"/>
    </location>
</feature>
<feature type="topological domain" description="Cytoplasmic" evidence="2">
    <location>
        <begin position="419"/>
        <end position="519"/>
    </location>
</feature>
<feature type="domain" description="LRRNT">
    <location>
        <begin position="39"/>
        <end position="67"/>
    </location>
</feature>
<feature type="repeat" description="LRR 1">
    <location>
        <begin position="68"/>
        <end position="89"/>
    </location>
</feature>
<feature type="repeat" description="LRR 2">
    <location>
        <begin position="93"/>
        <end position="114"/>
    </location>
</feature>
<feature type="repeat" description="LRR 3">
    <location>
        <begin position="117"/>
        <end position="138"/>
    </location>
</feature>
<feature type="repeat" description="LRR 4">
    <location>
        <begin position="141"/>
        <end position="162"/>
    </location>
</feature>
<feature type="repeat" description="LRR 5">
    <location>
        <begin position="165"/>
        <end position="186"/>
    </location>
</feature>
<feature type="repeat" description="LRR 6">
    <location>
        <begin position="192"/>
        <end position="213"/>
    </location>
</feature>
<feature type="domain" description="LRRCT">
    <location>
        <begin position="227"/>
        <end position="283"/>
    </location>
</feature>
<feature type="domain" description="Ig-like C2-type" evidence="2">
    <location>
        <begin position="288"/>
        <end position="378"/>
    </location>
</feature>
<feature type="region of interest" description="Disordered" evidence="4">
    <location>
        <begin position="498"/>
        <end position="519"/>
    </location>
</feature>
<feature type="glycosylation site" description="N-linked (GlcNAc...) asparagine" evidence="2">
    <location>
        <position position="57"/>
    </location>
</feature>
<feature type="glycosylation site" description="N-linked (GlcNAc...) asparagine" evidence="2">
    <location>
        <position position="103"/>
    </location>
</feature>
<feature type="glycosylation site" description="N-linked (GlcNAc...) asparagine" evidence="2">
    <location>
        <position position="280"/>
    </location>
</feature>
<feature type="glycosylation site" description="N-linked (GlcNAc...) asparagine" evidence="2">
    <location>
        <position position="287"/>
    </location>
</feature>
<feature type="glycosylation site" description="N-linked (GlcNAc...) asparagine" evidence="2">
    <location>
        <position position="344"/>
    </location>
</feature>
<feature type="glycosylation site" description="N-linked (GlcNAc...) asparagine" evidence="2">
    <location>
        <position position="372"/>
    </location>
</feature>
<feature type="glycosylation site" description="N-linked (GlcNAc...) asparagine" evidence="2">
    <location>
        <position position="380"/>
    </location>
</feature>
<feature type="glycosylation site" description="N-linked (GlcNAc...) asparagine" evidence="2">
    <location>
        <position position="383"/>
    </location>
</feature>
<feature type="glycosylation site" description="N-linked (GlcNAc...) asparagine" evidence="2">
    <location>
        <position position="387"/>
    </location>
</feature>
<feature type="disulfide bond" evidence="3">
    <location>
        <begin position="40"/>
        <end position="46"/>
    </location>
</feature>
<feature type="disulfide bond" evidence="3">
    <location>
        <begin position="44"/>
        <end position="53"/>
    </location>
</feature>
<feature type="disulfide bond" evidence="3">
    <location>
        <begin position="231"/>
        <end position="259"/>
    </location>
</feature>
<feature type="disulfide bond" evidence="3">
    <location>
        <begin position="233"/>
        <end position="281"/>
    </location>
</feature>
<feature type="disulfide bond" evidence="3">
    <location>
        <begin position="309"/>
        <end position="362"/>
    </location>
</feature>
<accession>Q80ZD9</accession>
<dbReference type="EMBL" id="AY237006">
    <property type="protein sequence ID" value="AAO48947.1"/>
    <property type="molecule type" value="mRNA"/>
</dbReference>
<dbReference type="EMBL" id="AB078880">
    <property type="protein sequence ID" value="BAC81187.1"/>
    <property type="molecule type" value="mRNA"/>
</dbReference>
<dbReference type="CCDS" id="CCDS27780.1"/>
<dbReference type="RefSeq" id="NP_001158035.1">
    <property type="nucleotide sequence ID" value="NM_001164563.1"/>
</dbReference>
<dbReference type="RefSeq" id="NP_001158074.1">
    <property type="nucleotide sequence ID" value="NM_001164602.1"/>
</dbReference>
<dbReference type="RefSeq" id="NP_835215.1">
    <property type="nucleotide sequence ID" value="NM_178114.4"/>
</dbReference>
<dbReference type="SMR" id="Q80ZD9"/>
<dbReference type="FunCoup" id="Q80ZD9">
    <property type="interactions" value="484"/>
</dbReference>
<dbReference type="STRING" id="10090.ENSMUSP00000155019"/>
<dbReference type="GlyCosmos" id="Q80ZD9">
    <property type="glycosylation" value="9 sites, No reported glycans"/>
</dbReference>
<dbReference type="GlyGen" id="Q80ZD9">
    <property type="glycosylation" value="10 sites, 2 N-linked glycans (2 sites)"/>
</dbReference>
<dbReference type="iPTMnet" id="Q80ZD9"/>
<dbReference type="PhosphoSitePlus" id="Q80ZD9"/>
<dbReference type="PaxDb" id="10090-ENSMUSP00000059913"/>
<dbReference type="ProteomicsDB" id="296027"/>
<dbReference type="Antibodypedia" id="13397">
    <property type="antibodies" value="233 antibodies from 31 providers"/>
</dbReference>
<dbReference type="DNASU" id="105827"/>
<dbReference type="Ensembl" id="ENSMUST00000053106.7">
    <property type="protein sequence ID" value="ENSMUSP00000059913.6"/>
    <property type="gene ID" value="ENSMUSG00000048218.7"/>
</dbReference>
<dbReference type="Ensembl" id="ENSMUST00000229890.2">
    <property type="protein sequence ID" value="ENSMUSP00000155019.2"/>
    <property type="gene ID" value="ENSMUSG00000048218.7"/>
</dbReference>
<dbReference type="GeneID" id="105827"/>
<dbReference type="KEGG" id="mmu:105827"/>
<dbReference type="UCSC" id="uc007xks.2">
    <property type="organism name" value="mouse"/>
</dbReference>
<dbReference type="AGR" id="MGI:2145995"/>
<dbReference type="CTD" id="347902"/>
<dbReference type="MGI" id="MGI:2145995">
    <property type="gene designation" value="Amigo2"/>
</dbReference>
<dbReference type="VEuPathDB" id="HostDB:ENSMUSG00000048218"/>
<dbReference type="eggNOG" id="ENOG502R009">
    <property type="taxonomic scope" value="Eukaryota"/>
</dbReference>
<dbReference type="GeneTree" id="ENSGT00950000183146"/>
<dbReference type="HOGENOM" id="CLU_030478_0_0_1"/>
<dbReference type="InParanoid" id="Q80ZD9"/>
<dbReference type="OMA" id="DFVWVGP"/>
<dbReference type="OrthoDB" id="676979at2759"/>
<dbReference type="PhylomeDB" id="Q80ZD9"/>
<dbReference type="TreeFam" id="TF326838"/>
<dbReference type="Reactome" id="R-MMU-9013149">
    <property type="pathway name" value="RAC1 GTPase cycle"/>
</dbReference>
<dbReference type="Reactome" id="R-MMU-9013423">
    <property type="pathway name" value="RAC3 GTPase cycle"/>
</dbReference>
<dbReference type="BioGRID-ORCS" id="105827">
    <property type="hits" value="1 hit in 77 CRISPR screens"/>
</dbReference>
<dbReference type="ChiTaRS" id="Amigo2">
    <property type="organism name" value="mouse"/>
</dbReference>
<dbReference type="PRO" id="PR:Q80ZD9"/>
<dbReference type="Proteomes" id="UP000000589">
    <property type="component" value="Chromosome 15"/>
</dbReference>
<dbReference type="RNAct" id="Q80ZD9">
    <property type="molecule type" value="protein"/>
</dbReference>
<dbReference type="Bgee" id="ENSMUSG00000048218">
    <property type="expression patterns" value="Expressed in metanephric ureteric bud and 147 other cell types or tissues"/>
</dbReference>
<dbReference type="ExpressionAtlas" id="Q80ZD9">
    <property type="expression patterns" value="baseline and differential"/>
</dbReference>
<dbReference type="GO" id="GO:0016020">
    <property type="term" value="C:membrane"/>
    <property type="evidence" value="ECO:0000266"/>
    <property type="project" value="MGI"/>
</dbReference>
<dbReference type="GO" id="GO:0005634">
    <property type="term" value="C:nucleus"/>
    <property type="evidence" value="ECO:0007669"/>
    <property type="project" value="UniProtKB-SubCell"/>
</dbReference>
<dbReference type="GO" id="GO:0005886">
    <property type="term" value="C:plasma membrane"/>
    <property type="evidence" value="ECO:0007669"/>
    <property type="project" value="UniProtKB-SubCell"/>
</dbReference>
<dbReference type="GO" id="GO:0007155">
    <property type="term" value="P:cell adhesion"/>
    <property type="evidence" value="ECO:0000266"/>
    <property type="project" value="MGI"/>
</dbReference>
<dbReference type="GO" id="GO:0007157">
    <property type="term" value="P:heterophilic cell-cell adhesion via plasma membrane cell adhesion molecules"/>
    <property type="evidence" value="ECO:0000250"/>
    <property type="project" value="UniProtKB"/>
</dbReference>
<dbReference type="GO" id="GO:0007156">
    <property type="term" value="P:homophilic cell adhesion via plasma membrane adhesion molecules"/>
    <property type="evidence" value="ECO:0000250"/>
    <property type="project" value="UniProtKB"/>
</dbReference>
<dbReference type="GO" id="GO:0043069">
    <property type="term" value="P:negative regulation of programmed cell death"/>
    <property type="evidence" value="ECO:0000250"/>
    <property type="project" value="UniProtKB"/>
</dbReference>
<dbReference type="GO" id="GO:0051965">
    <property type="term" value="P:positive regulation of synapse assembly"/>
    <property type="evidence" value="ECO:0000314"/>
    <property type="project" value="MGI"/>
</dbReference>
<dbReference type="FunFam" id="2.60.40.10:FF:001047">
    <property type="entry name" value="amphoterin-induced protein 2 isoform X1"/>
    <property type="match status" value="1"/>
</dbReference>
<dbReference type="FunFam" id="3.80.10.10:FF:000170">
    <property type="entry name" value="amphoterin-induced protein 2 isoform X1"/>
    <property type="match status" value="1"/>
</dbReference>
<dbReference type="Gene3D" id="2.60.40.10">
    <property type="entry name" value="Immunoglobulins"/>
    <property type="match status" value="1"/>
</dbReference>
<dbReference type="Gene3D" id="3.80.10.10">
    <property type="entry name" value="Ribonuclease Inhibitor"/>
    <property type="match status" value="1"/>
</dbReference>
<dbReference type="InterPro" id="IPR031283">
    <property type="entry name" value="AMIGO"/>
</dbReference>
<dbReference type="InterPro" id="IPR000483">
    <property type="entry name" value="Cys-rich_flank_reg_C"/>
</dbReference>
<dbReference type="InterPro" id="IPR007110">
    <property type="entry name" value="Ig-like_dom"/>
</dbReference>
<dbReference type="InterPro" id="IPR036179">
    <property type="entry name" value="Ig-like_dom_sf"/>
</dbReference>
<dbReference type="InterPro" id="IPR013783">
    <property type="entry name" value="Ig-like_fold"/>
</dbReference>
<dbReference type="InterPro" id="IPR003599">
    <property type="entry name" value="Ig_sub"/>
</dbReference>
<dbReference type="InterPro" id="IPR003598">
    <property type="entry name" value="Ig_sub2"/>
</dbReference>
<dbReference type="InterPro" id="IPR013151">
    <property type="entry name" value="Immunoglobulin_dom"/>
</dbReference>
<dbReference type="InterPro" id="IPR001611">
    <property type="entry name" value="Leu-rich_rpt"/>
</dbReference>
<dbReference type="InterPro" id="IPR003591">
    <property type="entry name" value="Leu-rich_rpt_typical-subtyp"/>
</dbReference>
<dbReference type="InterPro" id="IPR032675">
    <property type="entry name" value="LRR_dom_sf"/>
</dbReference>
<dbReference type="PANTHER" id="PTHR24368">
    <property type="entry name" value="AMPHOTERIN-INDUCED PROTEIN"/>
    <property type="match status" value="1"/>
</dbReference>
<dbReference type="PANTHER" id="PTHR24368:SF209">
    <property type="entry name" value="AMPHOTERIN-INDUCED PROTEIN 2"/>
    <property type="match status" value="1"/>
</dbReference>
<dbReference type="Pfam" id="PF00047">
    <property type="entry name" value="ig"/>
    <property type="match status" value="1"/>
</dbReference>
<dbReference type="Pfam" id="PF13855">
    <property type="entry name" value="LRR_8"/>
    <property type="match status" value="1"/>
</dbReference>
<dbReference type="SMART" id="SM00409">
    <property type="entry name" value="IG"/>
    <property type="match status" value="1"/>
</dbReference>
<dbReference type="SMART" id="SM00408">
    <property type="entry name" value="IGc2"/>
    <property type="match status" value="1"/>
</dbReference>
<dbReference type="SMART" id="SM00369">
    <property type="entry name" value="LRR_TYP"/>
    <property type="match status" value="5"/>
</dbReference>
<dbReference type="SMART" id="SM00082">
    <property type="entry name" value="LRRCT"/>
    <property type="match status" value="1"/>
</dbReference>
<dbReference type="SUPFAM" id="SSF48726">
    <property type="entry name" value="Immunoglobulin"/>
    <property type="match status" value="1"/>
</dbReference>
<dbReference type="SUPFAM" id="SSF52058">
    <property type="entry name" value="L domain-like"/>
    <property type="match status" value="1"/>
</dbReference>
<dbReference type="PROSITE" id="PS50835">
    <property type="entry name" value="IG_LIKE"/>
    <property type="match status" value="1"/>
</dbReference>
<dbReference type="PROSITE" id="PS51450">
    <property type="entry name" value="LRR"/>
    <property type="match status" value="6"/>
</dbReference>
<proteinExistence type="evidence at protein level"/>
<evidence type="ECO:0000250" key="1"/>
<evidence type="ECO:0000255" key="2"/>
<evidence type="ECO:0000255" key="3">
    <source>
        <dbReference type="PROSITE-ProRule" id="PRU00114"/>
    </source>
</evidence>
<evidence type="ECO:0000256" key="4">
    <source>
        <dbReference type="SAM" id="MobiDB-lite"/>
    </source>
</evidence>
<evidence type="ECO:0000269" key="5">
    <source>
    </source>
</evidence>
<evidence type="ECO:0000305" key="6"/>
<evidence type="ECO:0000312" key="7">
    <source>
        <dbReference type="EMBL" id="AAO48947.1"/>
    </source>
</evidence>
<evidence type="ECO:0000312" key="8">
    <source>
        <dbReference type="EMBL" id="BAC81187.1"/>
    </source>
</evidence>
<keyword id="KW-0130">Cell adhesion</keyword>
<keyword id="KW-1003">Cell membrane</keyword>
<keyword id="KW-1015">Disulfide bond</keyword>
<keyword id="KW-0325">Glycoprotein</keyword>
<keyword id="KW-0393">Immunoglobulin domain</keyword>
<keyword id="KW-0433">Leucine-rich repeat</keyword>
<keyword id="KW-0472">Membrane</keyword>
<keyword id="KW-0539">Nucleus</keyword>
<keyword id="KW-1185">Reference proteome</keyword>
<keyword id="KW-0677">Repeat</keyword>
<keyword id="KW-0732">Signal</keyword>
<keyword id="KW-0812">Transmembrane</keyword>
<keyword id="KW-1133">Transmembrane helix</keyword>
<name>AMGO2_MOUSE</name>
<organism>
    <name type="scientific">Mus musculus</name>
    <name type="common">Mouse</name>
    <dbReference type="NCBI Taxonomy" id="10090"/>
    <lineage>
        <taxon>Eukaryota</taxon>
        <taxon>Metazoa</taxon>
        <taxon>Chordata</taxon>
        <taxon>Craniata</taxon>
        <taxon>Vertebrata</taxon>
        <taxon>Euteleostomi</taxon>
        <taxon>Mammalia</taxon>
        <taxon>Eutheria</taxon>
        <taxon>Euarchontoglires</taxon>
        <taxon>Glires</taxon>
        <taxon>Rodentia</taxon>
        <taxon>Myomorpha</taxon>
        <taxon>Muroidea</taxon>
        <taxon>Muridae</taxon>
        <taxon>Murinae</taxon>
        <taxon>Mus</taxon>
        <taxon>Mus</taxon>
    </lineage>
</organism>
<reference evidence="6 7" key="1">
    <citation type="journal article" date="2003" name="J. Cell Biol.">
        <title>AMIGO, a transmembrane protein implicated in axon tract development, defines a novel protein family with leucine-rich repeats.</title>
        <authorList>
            <person name="Kuja-Panula J."/>
            <person name="Kiiltomaeki M."/>
            <person name="Yamashiro T."/>
            <person name="Rouhiainen A."/>
            <person name="Rauvala H."/>
        </authorList>
    </citation>
    <scope>NUCLEOTIDE SEQUENCE [MRNA]</scope>
    <scope>SUBUNIT</scope>
    <scope>TISSUE SPECIFICITY</scope>
    <source>
        <strain evidence="7">C57BL/6J</strain>
        <tissue evidence="5">Brain</tissue>
    </source>
</reference>
<reference evidence="8" key="2">
    <citation type="journal article" date="2003" name="J. Neurosci.">
        <title>Alivin 1, a novel neuronal activity-dependent gene, inhibits apoptosis and promotes survival of cerebellar granule neurons.</title>
        <authorList>
            <person name="Ono T."/>
            <person name="Sekino-Suzuki N."/>
            <person name="Kikkawa Y."/>
            <person name="Yonekawa H."/>
            <person name="Kawashima S."/>
        </authorList>
    </citation>
    <scope>NUCLEOTIDE SEQUENCE [MRNA]</scope>
    <source>
        <strain evidence="8">ICR</strain>
        <tissue evidence="8">Brain</tissue>
    </source>
</reference>